<proteinExistence type="inferred from homology"/>
<comment type="function">
    <text evidence="1">Catalyzes the phosphorylation of pantothenate (Pan), the first step in CoA biosynthesis.</text>
</comment>
<comment type="catalytic activity">
    <reaction evidence="1">
        <text>(R)-pantothenate + ATP = (R)-4'-phosphopantothenate + ADP + H(+)</text>
        <dbReference type="Rhea" id="RHEA:16373"/>
        <dbReference type="ChEBI" id="CHEBI:10986"/>
        <dbReference type="ChEBI" id="CHEBI:15378"/>
        <dbReference type="ChEBI" id="CHEBI:29032"/>
        <dbReference type="ChEBI" id="CHEBI:30616"/>
        <dbReference type="ChEBI" id="CHEBI:456216"/>
        <dbReference type="EC" id="2.7.1.33"/>
    </reaction>
</comment>
<comment type="cofactor">
    <cofactor evidence="1">
        <name>NH4(+)</name>
        <dbReference type="ChEBI" id="CHEBI:28938"/>
    </cofactor>
    <cofactor evidence="1">
        <name>K(+)</name>
        <dbReference type="ChEBI" id="CHEBI:29103"/>
    </cofactor>
    <text evidence="1">A monovalent cation. Ammonium or potassium.</text>
</comment>
<comment type="pathway">
    <text evidence="1">Cofactor biosynthesis; coenzyme A biosynthesis; CoA from (R)-pantothenate: step 1/5.</text>
</comment>
<comment type="subunit">
    <text evidence="1">Homodimer.</text>
</comment>
<comment type="subcellular location">
    <subcellularLocation>
        <location evidence="1">Cytoplasm</location>
    </subcellularLocation>
</comment>
<comment type="similarity">
    <text evidence="1">Belongs to the type III pantothenate kinase family.</text>
</comment>
<gene>
    <name evidence="1" type="primary">coaX</name>
    <name type="ordered locus">Pput_0471</name>
</gene>
<reference key="1">
    <citation type="submission" date="2007-05" db="EMBL/GenBank/DDBJ databases">
        <title>Complete sequence of Pseudomonas putida F1.</title>
        <authorList>
            <consortium name="US DOE Joint Genome Institute"/>
            <person name="Copeland A."/>
            <person name="Lucas S."/>
            <person name="Lapidus A."/>
            <person name="Barry K."/>
            <person name="Detter J.C."/>
            <person name="Glavina del Rio T."/>
            <person name="Hammon N."/>
            <person name="Israni S."/>
            <person name="Dalin E."/>
            <person name="Tice H."/>
            <person name="Pitluck S."/>
            <person name="Chain P."/>
            <person name="Malfatti S."/>
            <person name="Shin M."/>
            <person name="Vergez L."/>
            <person name="Schmutz J."/>
            <person name="Larimer F."/>
            <person name="Land M."/>
            <person name="Hauser L."/>
            <person name="Kyrpides N."/>
            <person name="Lykidis A."/>
            <person name="Parales R."/>
            <person name="Richardson P."/>
        </authorList>
    </citation>
    <scope>NUCLEOTIDE SEQUENCE [LARGE SCALE GENOMIC DNA]</scope>
    <source>
        <strain>ATCC 700007 / DSM 6899 / JCM 31910 / BCRC 17059 / LMG 24140 / F1</strain>
    </source>
</reference>
<protein>
    <recommendedName>
        <fullName evidence="1">Type III pantothenate kinase</fullName>
        <ecNumber evidence="1">2.7.1.33</ecNumber>
    </recommendedName>
    <alternativeName>
        <fullName evidence="1">PanK-III</fullName>
    </alternativeName>
    <alternativeName>
        <fullName evidence="1">Pantothenic acid kinase</fullName>
    </alternativeName>
</protein>
<dbReference type="EC" id="2.7.1.33" evidence="1"/>
<dbReference type="EMBL" id="CP000712">
    <property type="protein sequence ID" value="ABQ76641.1"/>
    <property type="molecule type" value="Genomic_DNA"/>
</dbReference>
<dbReference type="SMR" id="A5VXN1"/>
<dbReference type="KEGG" id="ppf:Pput_0471"/>
<dbReference type="eggNOG" id="COG1521">
    <property type="taxonomic scope" value="Bacteria"/>
</dbReference>
<dbReference type="HOGENOM" id="CLU_066627_0_1_6"/>
<dbReference type="UniPathway" id="UPA00241">
    <property type="reaction ID" value="UER00352"/>
</dbReference>
<dbReference type="GO" id="GO:0005737">
    <property type="term" value="C:cytoplasm"/>
    <property type="evidence" value="ECO:0007669"/>
    <property type="project" value="UniProtKB-SubCell"/>
</dbReference>
<dbReference type="GO" id="GO:0005524">
    <property type="term" value="F:ATP binding"/>
    <property type="evidence" value="ECO:0007669"/>
    <property type="project" value="UniProtKB-UniRule"/>
</dbReference>
<dbReference type="GO" id="GO:0046872">
    <property type="term" value="F:metal ion binding"/>
    <property type="evidence" value="ECO:0007669"/>
    <property type="project" value="UniProtKB-KW"/>
</dbReference>
<dbReference type="GO" id="GO:0004594">
    <property type="term" value="F:pantothenate kinase activity"/>
    <property type="evidence" value="ECO:0007669"/>
    <property type="project" value="UniProtKB-UniRule"/>
</dbReference>
<dbReference type="GO" id="GO:0015937">
    <property type="term" value="P:coenzyme A biosynthetic process"/>
    <property type="evidence" value="ECO:0007669"/>
    <property type="project" value="UniProtKB-UniRule"/>
</dbReference>
<dbReference type="CDD" id="cd24015">
    <property type="entry name" value="ASKHA_NBD_PanK-III"/>
    <property type="match status" value="1"/>
</dbReference>
<dbReference type="Gene3D" id="3.30.420.40">
    <property type="match status" value="2"/>
</dbReference>
<dbReference type="HAMAP" id="MF_01274">
    <property type="entry name" value="Pantothen_kinase_3"/>
    <property type="match status" value="1"/>
</dbReference>
<dbReference type="InterPro" id="IPR043129">
    <property type="entry name" value="ATPase_NBD"/>
</dbReference>
<dbReference type="InterPro" id="IPR004619">
    <property type="entry name" value="Type_III_PanK"/>
</dbReference>
<dbReference type="NCBIfam" id="TIGR00671">
    <property type="entry name" value="baf"/>
    <property type="match status" value="1"/>
</dbReference>
<dbReference type="NCBIfam" id="NF009857">
    <property type="entry name" value="PRK13322.1-2"/>
    <property type="match status" value="1"/>
</dbReference>
<dbReference type="NCBIfam" id="NF009859">
    <property type="entry name" value="PRK13322.1-4"/>
    <property type="match status" value="1"/>
</dbReference>
<dbReference type="PANTHER" id="PTHR34265">
    <property type="entry name" value="TYPE III PANTOTHENATE KINASE"/>
    <property type="match status" value="1"/>
</dbReference>
<dbReference type="PANTHER" id="PTHR34265:SF1">
    <property type="entry name" value="TYPE III PANTOTHENATE KINASE"/>
    <property type="match status" value="1"/>
</dbReference>
<dbReference type="Pfam" id="PF03309">
    <property type="entry name" value="Pan_kinase"/>
    <property type="match status" value="1"/>
</dbReference>
<dbReference type="SUPFAM" id="SSF53067">
    <property type="entry name" value="Actin-like ATPase domain"/>
    <property type="match status" value="2"/>
</dbReference>
<sequence>MILELDCGNSFIKWRVIHVADAVIEGGGIVDSDQALVAEVAALASVRLTGCRIVSVRSEEETDALCALIAQAFAVQARVAHPVREMAGVRNGYDDYQRLGMDRWLAALGAFHLAKGACLVIDLGTAAKADFVSADGEHLGGYICPGMPLMRSQLRTHTRRIRYDDASAERALNSLSPGRSTVEAVERGCVLMLQGFAYTQLEQARVLWGEEFTVFLTGGDAPLVREALPQARVVPDLVFVGLAMACPLD</sequence>
<name>COAX_PSEP1</name>
<evidence type="ECO:0000255" key="1">
    <source>
        <dbReference type="HAMAP-Rule" id="MF_01274"/>
    </source>
</evidence>
<feature type="chain" id="PRO_1000054405" description="Type III pantothenate kinase">
    <location>
        <begin position="1"/>
        <end position="249"/>
    </location>
</feature>
<feature type="active site" description="Proton acceptor" evidence="1">
    <location>
        <position position="102"/>
    </location>
</feature>
<feature type="binding site" evidence="1">
    <location>
        <begin position="6"/>
        <end position="13"/>
    </location>
    <ligand>
        <name>ATP</name>
        <dbReference type="ChEBI" id="CHEBI:30616"/>
    </ligand>
</feature>
<feature type="binding site" evidence="1">
    <location>
        <position position="93"/>
    </location>
    <ligand>
        <name>substrate</name>
    </ligand>
</feature>
<feature type="binding site" evidence="1">
    <location>
        <begin position="100"/>
        <end position="103"/>
    </location>
    <ligand>
        <name>substrate</name>
    </ligand>
</feature>
<feature type="binding site" evidence="1">
    <location>
        <position position="122"/>
    </location>
    <ligand>
        <name>K(+)</name>
        <dbReference type="ChEBI" id="CHEBI:29103"/>
    </ligand>
</feature>
<feature type="binding site" evidence="1">
    <location>
        <position position="125"/>
    </location>
    <ligand>
        <name>ATP</name>
        <dbReference type="ChEBI" id="CHEBI:30616"/>
    </ligand>
</feature>
<feature type="binding site" evidence="1">
    <location>
        <position position="181"/>
    </location>
    <ligand>
        <name>substrate</name>
    </ligand>
</feature>
<keyword id="KW-0067">ATP-binding</keyword>
<keyword id="KW-0173">Coenzyme A biosynthesis</keyword>
<keyword id="KW-0963">Cytoplasm</keyword>
<keyword id="KW-0418">Kinase</keyword>
<keyword id="KW-0479">Metal-binding</keyword>
<keyword id="KW-0547">Nucleotide-binding</keyword>
<keyword id="KW-0630">Potassium</keyword>
<keyword id="KW-0808">Transferase</keyword>
<organism>
    <name type="scientific">Pseudomonas putida (strain ATCC 700007 / DSM 6899 / JCM 31910 / BCRC 17059 / LMG 24140 / F1)</name>
    <dbReference type="NCBI Taxonomy" id="351746"/>
    <lineage>
        <taxon>Bacteria</taxon>
        <taxon>Pseudomonadati</taxon>
        <taxon>Pseudomonadota</taxon>
        <taxon>Gammaproteobacteria</taxon>
        <taxon>Pseudomonadales</taxon>
        <taxon>Pseudomonadaceae</taxon>
        <taxon>Pseudomonas</taxon>
    </lineage>
</organism>
<accession>A5VXN1</accession>